<comment type="similarity">
    <text evidence="1">Belongs to the CinA family.</text>
</comment>
<dbReference type="EMBL" id="BA000034">
    <property type="protein sequence ID" value="BAC64894.1"/>
    <property type="molecule type" value="Genomic_DNA"/>
</dbReference>
<dbReference type="RefSeq" id="WP_011055089.1">
    <property type="nucleotide sequence ID" value="NC_004606.1"/>
</dbReference>
<dbReference type="SMR" id="P0DA27"/>
<dbReference type="KEGG" id="sps:SPs1799"/>
<dbReference type="HOGENOM" id="CLU_030805_9_3_9"/>
<dbReference type="CDD" id="cd00885">
    <property type="entry name" value="cinA"/>
    <property type="match status" value="1"/>
</dbReference>
<dbReference type="Gene3D" id="3.30.70.2860">
    <property type="match status" value="1"/>
</dbReference>
<dbReference type="Gene3D" id="3.90.950.20">
    <property type="entry name" value="CinA-like"/>
    <property type="match status" value="1"/>
</dbReference>
<dbReference type="Gene3D" id="3.40.980.10">
    <property type="entry name" value="MoaB/Mog-like domain"/>
    <property type="match status" value="1"/>
</dbReference>
<dbReference type="HAMAP" id="MF_00226_B">
    <property type="entry name" value="CinA_B"/>
    <property type="match status" value="1"/>
</dbReference>
<dbReference type="InterPro" id="IPR050101">
    <property type="entry name" value="CinA"/>
</dbReference>
<dbReference type="InterPro" id="IPR036653">
    <property type="entry name" value="CinA-like_C"/>
</dbReference>
<dbReference type="InterPro" id="IPR008136">
    <property type="entry name" value="CinA_C"/>
</dbReference>
<dbReference type="InterPro" id="IPR041424">
    <property type="entry name" value="CinA_KH"/>
</dbReference>
<dbReference type="InterPro" id="IPR008135">
    <property type="entry name" value="Competence-induced_CinA"/>
</dbReference>
<dbReference type="InterPro" id="IPR036425">
    <property type="entry name" value="MoaB/Mog-like_dom_sf"/>
</dbReference>
<dbReference type="InterPro" id="IPR001453">
    <property type="entry name" value="MoaB/Mog_dom"/>
</dbReference>
<dbReference type="NCBIfam" id="TIGR00200">
    <property type="entry name" value="cinA_nterm"/>
    <property type="match status" value="1"/>
</dbReference>
<dbReference type="NCBIfam" id="TIGR00177">
    <property type="entry name" value="molyb_syn"/>
    <property type="match status" value="1"/>
</dbReference>
<dbReference type="NCBIfam" id="TIGR00199">
    <property type="entry name" value="PncC_domain"/>
    <property type="match status" value="1"/>
</dbReference>
<dbReference type="NCBIfam" id="NF001813">
    <property type="entry name" value="PRK00549.1"/>
    <property type="match status" value="1"/>
</dbReference>
<dbReference type="PANTHER" id="PTHR13939">
    <property type="entry name" value="NICOTINAMIDE-NUCLEOTIDE AMIDOHYDROLASE PNCC"/>
    <property type="match status" value="1"/>
</dbReference>
<dbReference type="PANTHER" id="PTHR13939:SF0">
    <property type="entry name" value="NMN AMIDOHYDROLASE-LIKE PROTEIN YFAY"/>
    <property type="match status" value="1"/>
</dbReference>
<dbReference type="Pfam" id="PF02464">
    <property type="entry name" value="CinA"/>
    <property type="match status" value="1"/>
</dbReference>
<dbReference type="Pfam" id="PF18146">
    <property type="entry name" value="CinA_KH"/>
    <property type="match status" value="1"/>
</dbReference>
<dbReference type="Pfam" id="PF00994">
    <property type="entry name" value="MoCF_biosynth"/>
    <property type="match status" value="1"/>
</dbReference>
<dbReference type="PIRSF" id="PIRSF006728">
    <property type="entry name" value="CinA"/>
    <property type="match status" value="1"/>
</dbReference>
<dbReference type="SMART" id="SM00852">
    <property type="entry name" value="MoCF_biosynth"/>
    <property type="match status" value="1"/>
</dbReference>
<dbReference type="SUPFAM" id="SSF142433">
    <property type="entry name" value="CinA-like"/>
    <property type="match status" value="1"/>
</dbReference>
<dbReference type="SUPFAM" id="SSF53218">
    <property type="entry name" value="Molybdenum cofactor biosynthesis proteins"/>
    <property type="match status" value="1"/>
</dbReference>
<gene>
    <name evidence="1" type="primary">cinA</name>
    <name type="ordered locus">SPs1799</name>
</gene>
<feature type="chain" id="PRO_0000411301" description="Putative competence-damage inducible protein">
    <location>
        <begin position="1"/>
        <end position="423"/>
    </location>
</feature>
<reference key="1">
    <citation type="journal article" date="2003" name="Genome Res.">
        <title>Genome sequence of an M3 strain of Streptococcus pyogenes reveals a large-scale genomic rearrangement in invasive strains and new insights into phage evolution.</title>
        <authorList>
            <person name="Nakagawa I."/>
            <person name="Kurokawa K."/>
            <person name="Yamashita A."/>
            <person name="Nakata M."/>
            <person name="Tomiyasu Y."/>
            <person name="Okahashi N."/>
            <person name="Kawabata S."/>
            <person name="Yamazaki K."/>
            <person name="Shiba T."/>
            <person name="Yasunaga T."/>
            <person name="Hayashi H."/>
            <person name="Hattori M."/>
            <person name="Hamada S."/>
        </authorList>
    </citation>
    <scope>NUCLEOTIDE SEQUENCE [LARGE SCALE GENOMIC DNA]</scope>
    <source>
        <strain>SSI-1</strain>
    </source>
</reference>
<evidence type="ECO:0000255" key="1">
    <source>
        <dbReference type="HAMAP-Rule" id="MF_00226"/>
    </source>
</evidence>
<sequence length="423" mass="45952">MKAELIAVGTEILTGQIVNTNAQFLSEKMAELGIDVYFQTAVGDNEERLLSVITTASQRSDLVILCGGLGPTKDDLTKQTLAKYLRRDLVYDEQACQKLDDFFAKRKPSSRTPNNERQAQVIEGSIPLPNKTGLAVGGFITVDGISYVVLPGPPSELKPMVNEELVPLLSKQYSTLYSKVLRFFGIGESQLVTVLSDFIENQTDPTIAPYAKTGEVTLRLSTKTENQALADKKLGQLEAQLLSRKTLEGQPLADVFYGYGEDNSLARETFELLVKYDKSITAAESLTAGLFQSTLASFPGASQVFNGGFVTYSMEEKAKMLGLPLEELKSHGVVSAYTAEGMAEQARLLTGADIGVSLTGVAGPDMLEEQPAGTVFIGLATQNKVESIKVLISGRSRLDVCYIATLHAFNMVRKTLLKLENLL</sequence>
<proteinExistence type="inferred from homology"/>
<accession>P0DA27</accession>
<accession>Q8K5J9</accession>
<organism>
    <name type="scientific">Streptococcus pyogenes serotype M3 (strain SSI-1)</name>
    <dbReference type="NCBI Taxonomy" id="193567"/>
    <lineage>
        <taxon>Bacteria</taxon>
        <taxon>Bacillati</taxon>
        <taxon>Bacillota</taxon>
        <taxon>Bacilli</taxon>
        <taxon>Lactobacillales</taxon>
        <taxon>Streptococcaceae</taxon>
        <taxon>Streptococcus</taxon>
    </lineage>
</organism>
<name>CINA_STRPQ</name>
<protein>
    <recommendedName>
        <fullName evidence="1">Putative competence-damage inducible protein</fullName>
    </recommendedName>
</protein>